<dbReference type="EC" id="1.11.1.7"/>
<dbReference type="EMBL" id="M58381">
    <property type="protein sequence ID" value="AAA32842.1"/>
    <property type="molecule type" value="Genomic_DNA"/>
</dbReference>
<dbReference type="EMBL" id="AF452388">
    <property type="protein sequence ID" value="AAL40852.1"/>
    <property type="molecule type" value="mRNA"/>
</dbReference>
<dbReference type="EMBL" id="AC004683">
    <property type="protein sequence ID" value="AAC28766.1"/>
    <property type="molecule type" value="Genomic_DNA"/>
</dbReference>
<dbReference type="EMBL" id="CP002685">
    <property type="protein sequence ID" value="AEC09530.1"/>
    <property type="molecule type" value="Genomic_DNA"/>
</dbReference>
<dbReference type="EMBL" id="AY059106">
    <property type="protein sequence ID" value="AAL15212.1"/>
    <property type="molecule type" value="mRNA"/>
</dbReference>
<dbReference type="EMBL" id="AY035033">
    <property type="protein sequence ID" value="AAK59538.1"/>
    <property type="molecule type" value="mRNA"/>
</dbReference>
<dbReference type="PIR" id="JU0458">
    <property type="entry name" value="JU0458"/>
</dbReference>
<dbReference type="PIR" id="T02507">
    <property type="entry name" value="T02507"/>
</dbReference>
<dbReference type="RefSeq" id="NP_181372.1">
    <property type="nucleotide sequence ID" value="NM_129394.3"/>
</dbReference>
<dbReference type="SMR" id="P24102"/>
<dbReference type="BioGRID" id="3761">
    <property type="interactions" value="2"/>
</dbReference>
<dbReference type="FunCoup" id="P24102">
    <property type="interactions" value="128"/>
</dbReference>
<dbReference type="STRING" id="3702.P24102"/>
<dbReference type="PeroxiBase" id="115">
    <property type="entry name" value="AtPrx22"/>
</dbReference>
<dbReference type="GlyCosmos" id="P24102">
    <property type="glycosylation" value="5 sites, No reported glycans"/>
</dbReference>
<dbReference type="GlyGen" id="P24102">
    <property type="glycosylation" value="6 sites"/>
</dbReference>
<dbReference type="MetOSite" id="P24102"/>
<dbReference type="PaxDb" id="3702-AT2G38380.1"/>
<dbReference type="ProteomicsDB" id="236693"/>
<dbReference type="EnsemblPlants" id="AT2G38380.1">
    <property type="protein sequence ID" value="AT2G38380.1"/>
    <property type="gene ID" value="AT2G38380"/>
</dbReference>
<dbReference type="GeneID" id="818419"/>
<dbReference type="Gramene" id="AT2G38380.1">
    <property type="protein sequence ID" value="AT2G38380.1"/>
    <property type="gene ID" value="AT2G38380"/>
</dbReference>
<dbReference type="KEGG" id="ath:AT2G38380"/>
<dbReference type="Araport" id="AT2G38380"/>
<dbReference type="TAIR" id="AT2G38380"/>
<dbReference type="eggNOG" id="ENOG502QVXS">
    <property type="taxonomic scope" value="Eukaryota"/>
</dbReference>
<dbReference type="HOGENOM" id="CLU_010543_0_1_1"/>
<dbReference type="InParanoid" id="P24102"/>
<dbReference type="OMA" id="GRSHCAF"/>
<dbReference type="OrthoDB" id="2113341at2759"/>
<dbReference type="PhylomeDB" id="P24102"/>
<dbReference type="BioCyc" id="ARA:AT2G38380-MONOMER"/>
<dbReference type="PRO" id="PR:P24102"/>
<dbReference type="Proteomes" id="UP000006548">
    <property type="component" value="Chromosome 2"/>
</dbReference>
<dbReference type="ExpressionAtlas" id="P24102">
    <property type="expression patterns" value="baseline and differential"/>
</dbReference>
<dbReference type="GO" id="GO:0005576">
    <property type="term" value="C:extracellular region"/>
    <property type="evidence" value="ECO:0007669"/>
    <property type="project" value="UniProtKB-SubCell"/>
</dbReference>
<dbReference type="GO" id="GO:0099503">
    <property type="term" value="C:secretory vesicle"/>
    <property type="evidence" value="ECO:0007005"/>
    <property type="project" value="TAIR"/>
</dbReference>
<dbReference type="GO" id="GO:0005773">
    <property type="term" value="C:vacuole"/>
    <property type="evidence" value="ECO:0007669"/>
    <property type="project" value="UniProtKB-SubCell"/>
</dbReference>
<dbReference type="GO" id="GO:0020037">
    <property type="term" value="F:heme binding"/>
    <property type="evidence" value="ECO:0007669"/>
    <property type="project" value="InterPro"/>
</dbReference>
<dbReference type="GO" id="GO:0140825">
    <property type="term" value="F:lactoperoxidase activity"/>
    <property type="evidence" value="ECO:0007669"/>
    <property type="project" value="UniProtKB-EC"/>
</dbReference>
<dbReference type="GO" id="GO:0046872">
    <property type="term" value="F:metal ion binding"/>
    <property type="evidence" value="ECO:0007669"/>
    <property type="project" value="UniProtKB-KW"/>
</dbReference>
<dbReference type="GO" id="GO:0042744">
    <property type="term" value="P:hydrogen peroxide catabolic process"/>
    <property type="evidence" value="ECO:0007669"/>
    <property type="project" value="UniProtKB-KW"/>
</dbReference>
<dbReference type="GO" id="GO:0006979">
    <property type="term" value="P:response to oxidative stress"/>
    <property type="evidence" value="ECO:0007669"/>
    <property type="project" value="InterPro"/>
</dbReference>
<dbReference type="GO" id="GO:0010043">
    <property type="term" value="P:response to zinc ion"/>
    <property type="evidence" value="ECO:0000270"/>
    <property type="project" value="TAIR"/>
</dbReference>
<dbReference type="CDD" id="cd00693">
    <property type="entry name" value="secretory_peroxidase"/>
    <property type="match status" value="1"/>
</dbReference>
<dbReference type="FunFam" id="1.10.420.10:FF:000001">
    <property type="entry name" value="Peroxidase"/>
    <property type="match status" value="1"/>
</dbReference>
<dbReference type="FunFam" id="1.10.520.10:FF:000009">
    <property type="entry name" value="Peroxidase"/>
    <property type="match status" value="1"/>
</dbReference>
<dbReference type="Gene3D" id="1.10.520.10">
    <property type="match status" value="1"/>
</dbReference>
<dbReference type="Gene3D" id="1.10.420.10">
    <property type="entry name" value="Peroxidase, domain 2"/>
    <property type="match status" value="1"/>
</dbReference>
<dbReference type="InterPro" id="IPR002016">
    <property type="entry name" value="Haem_peroxidase"/>
</dbReference>
<dbReference type="InterPro" id="IPR010255">
    <property type="entry name" value="Haem_peroxidase_sf"/>
</dbReference>
<dbReference type="InterPro" id="IPR000823">
    <property type="entry name" value="Peroxidase_pln"/>
</dbReference>
<dbReference type="InterPro" id="IPR019794">
    <property type="entry name" value="Peroxidases_AS"/>
</dbReference>
<dbReference type="InterPro" id="IPR019793">
    <property type="entry name" value="Peroxidases_heam-ligand_BS"/>
</dbReference>
<dbReference type="InterPro" id="IPR033905">
    <property type="entry name" value="Secretory_peroxidase"/>
</dbReference>
<dbReference type="PANTHER" id="PTHR31388:SF270">
    <property type="entry name" value="PEROXIDASE 22-RELATED"/>
    <property type="match status" value="1"/>
</dbReference>
<dbReference type="PANTHER" id="PTHR31388">
    <property type="entry name" value="PEROXIDASE 72-RELATED"/>
    <property type="match status" value="1"/>
</dbReference>
<dbReference type="Pfam" id="PF00141">
    <property type="entry name" value="peroxidase"/>
    <property type="match status" value="1"/>
</dbReference>
<dbReference type="PRINTS" id="PR00458">
    <property type="entry name" value="PEROXIDASE"/>
</dbReference>
<dbReference type="PRINTS" id="PR00461">
    <property type="entry name" value="PLPEROXIDASE"/>
</dbReference>
<dbReference type="SUPFAM" id="SSF48113">
    <property type="entry name" value="Heme-dependent peroxidases"/>
    <property type="match status" value="1"/>
</dbReference>
<dbReference type="PROSITE" id="PS00435">
    <property type="entry name" value="PEROXIDASE_1"/>
    <property type="match status" value="1"/>
</dbReference>
<dbReference type="PROSITE" id="PS00436">
    <property type="entry name" value="PEROXIDASE_2"/>
    <property type="match status" value="1"/>
</dbReference>
<dbReference type="PROSITE" id="PS50873">
    <property type="entry name" value="PEROXIDASE_4"/>
    <property type="match status" value="1"/>
</dbReference>
<sequence>MGFSPSFSCSAIGALILGCLLLQASNSNAQLRPDFYFGTCPFVFDIIGNIIVDELQTDPRIAASLLRLHFHDCFVRGCDASILLDNSTSFRTEKDAAPNANSARGFNVIDRMKVALERACPGRVSCADILTIASQISVLLSGGPWWPVPLGRRDSVEAFFALANTALPSPFFNLTQLKTAFADVGLNRTSDLVALSGGHTFGRAQCQFVTPRLYNFNGTNSPDPSLNPTYLVELRRLCPQNGNGTVLVNFDVVTPDAFDSQYYTNLRNGKGLIQSDQELFSTPGADTIPLVNQYSSDMSVFFRAFIDAMIRMGNLRPLTGTQGEIRQNCRVVNPRIRVVENDDGVVSSI</sequence>
<accession>P24102</accession>
<accession>O80913</accession>
<protein>
    <recommendedName>
        <fullName>Peroxidase 22</fullName>
        <shortName>Atperox P22</shortName>
        <ecNumber>1.11.1.7</ecNumber>
    </recommendedName>
    <alternativeName>
        <fullName>ATPEa</fullName>
    </alternativeName>
    <alternativeName>
        <fullName>Basic peroxidase E</fullName>
    </alternativeName>
</protein>
<comment type="function">
    <text>Removal of H(2)O(2), oxidation of toxic reductants, biosynthesis and degradation of lignin, suberization, auxin catabolism, response to environmental stresses such as wounding, pathogen attack and oxidative stress. These functions might be dependent on each isozyme/isoform in each plant tissue.</text>
</comment>
<comment type="catalytic activity">
    <reaction>
        <text>2 a phenolic donor + H2O2 = 2 a phenolic radical donor + 2 H2O</text>
        <dbReference type="Rhea" id="RHEA:56136"/>
        <dbReference type="ChEBI" id="CHEBI:15377"/>
        <dbReference type="ChEBI" id="CHEBI:16240"/>
        <dbReference type="ChEBI" id="CHEBI:139520"/>
        <dbReference type="ChEBI" id="CHEBI:139521"/>
        <dbReference type="EC" id="1.11.1.7"/>
    </reaction>
</comment>
<comment type="cofactor">
    <cofactor evidence="3">
        <name>heme b</name>
        <dbReference type="ChEBI" id="CHEBI:60344"/>
    </cofactor>
    <text evidence="3">Binds 1 heme b (iron(II)-protoporphyrin IX) group per subunit.</text>
</comment>
<comment type="cofactor">
    <cofactor evidence="3">
        <name>Ca(2+)</name>
        <dbReference type="ChEBI" id="CHEBI:29108"/>
    </cofactor>
    <text evidence="3">Binds 2 calcium ions per subunit.</text>
</comment>
<comment type="subcellular location">
    <subcellularLocation>
        <location evidence="7">Secreted</location>
    </subcellularLocation>
    <subcellularLocation>
        <location evidence="7">Vacuole</location>
    </subcellularLocation>
    <text>Carboxy-terminal extension appears to target the protein to vacuoles.</text>
</comment>
<comment type="tissue specificity">
    <text evidence="4 6">Mainly expressed in roots.</text>
</comment>
<comment type="induction">
    <text evidence="5">Responsiveness to high-salt stress.</text>
</comment>
<comment type="miscellaneous">
    <text>There are 73 peroxidase genes in A.thaliana.</text>
</comment>
<comment type="similarity">
    <text evidence="3">Belongs to the peroxidase family. Classical plant (class III) peroxidase subfamily.</text>
</comment>
<keyword id="KW-0106">Calcium</keyword>
<keyword id="KW-1015">Disulfide bond</keyword>
<keyword id="KW-0325">Glycoprotein</keyword>
<keyword id="KW-0349">Heme</keyword>
<keyword id="KW-0376">Hydrogen peroxide</keyword>
<keyword id="KW-0408">Iron</keyword>
<keyword id="KW-0479">Metal-binding</keyword>
<keyword id="KW-0560">Oxidoreductase</keyword>
<keyword id="KW-0575">Peroxidase</keyword>
<keyword id="KW-0873">Pyrrolidone carboxylic acid</keyword>
<keyword id="KW-1185">Reference proteome</keyword>
<keyword id="KW-0964">Secreted</keyword>
<keyword id="KW-0732">Signal</keyword>
<keyword id="KW-0926">Vacuole</keyword>
<name>PER22_ARATH</name>
<evidence type="ECO:0000250" key="1">
    <source>
        <dbReference type="UniProtKB" id="Q42578"/>
    </source>
</evidence>
<evidence type="ECO:0000255" key="2"/>
<evidence type="ECO:0000255" key="3">
    <source>
        <dbReference type="PROSITE-ProRule" id="PRU00297"/>
    </source>
</evidence>
<evidence type="ECO:0000269" key="4">
    <source>
    </source>
</evidence>
<evidence type="ECO:0000269" key="5">
    <source>
    </source>
</evidence>
<evidence type="ECO:0000269" key="6">
    <source ref="7"/>
</evidence>
<evidence type="ECO:0000305" key="7"/>
<feature type="signal peptide" evidence="2">
    <location>
        <begin position="1"/>
        <end position="29"/>
    </location>
</feature>
<feature type="chain" id="PRO_0000023688" description="Peroxidase 22">
    <location>
        <begin position="30"/>
        <end position="349"/>
    </location>
</feature>
<feature type="active site" description="Proton acceptor">
    <location>
        <position position="71"/>
    </location>
</feature>
<feature type="binding site" evidence="3">
    <location>
        <position position="72"/>
    </location>
    <ligand>
        <name>Ca(2+)</name>
        <dbReference type="ChEBI" id="CHEBI:29108"/>
        <label>1</label>
    </ligand>
</feature>
<feature type="binding site" evidence="3">
    <location>
        <position position="75"/>
    </location>
    <ligand>
        <name>Ca(2+)</name>
        <dbReference type="ChEBI" id="CHEBI:29108"/>
        <label>1</label>
    </ligand>
</feature>
<feature type="binding site" evidence="3">
    <location>
        <position position="77"/>
    </location>
    <ligand>
        <name>Ca(2+)</name>
        <dbReference type="ChEBI" id="CHEBI:29108"/>
        <label>1</label>
    </ligand>
</feature>
<feature type="binding site" evidence="3">
    <location>
        <position position="79"/>
    </location>
    <ligand>
        <name>Ca(2+)</name>
        <dbReference type="ChEBI" id="CHEBI:29108"/>
        <label>1</label>
    </ligand>
</feature>
<feature type="binding site" evidence="3">
    <location>
        <position position="81"/>
    </location>
    <ligand>
        <name>Ca(2+)</name>
        <dbReference type="ChEBI" id="CHEBI:29108"/>
        <label>1</label>
    </ligand>
</feature>
<feature type="binding site" evidence="3">
    <location>
        <position position="168"/>
    </location>
    <ligand>
        <name>substrate</name>
    </ligand>
</feature>
<feature type="binding site" description="axial binding residue" evidence="3">
    <location>
        <position position="199"/>
    </location>
    <ligand>
        <name>heme b</name>
        <dbReference type="ChEBI" id="CHEBI:60344"/>
    </ligand>
    <ligandPart>
        <name>Fe</name>
        <dbReference type="ChEBI" id="CHEBI:18248"/>
    </ligandPart>
</feature>
<feature type="binding site" evidence="3">
    <location>
        <position position="200"/>
    </location>
    <ligand>
        <name>Ca(2+)</name>
        <dbReference type="ChEBI" id="CHEBI:29108"/>
        <label>2</label>
    </ligand>
</feature>
<feature type="binding site" evidence="3">
    <location>
        <position position="251"/>
    </location>
    <ligand>
        <name>Ca(2+)</name>
        <dbReference type="ChEBI" id="CHEBI:29108"/>
        <label>2</label>
    </ligand>
</feature>
<feature type="binding site" evidence="3">
    <location>
        <position position="254"/>
    </location>
    <ligand>
        <name>Ca(2+)</name>
        <dbReference type="ChEBI" id="CHEBI:29108"/>
        <label>2</label>
    </ligand>
</feature>
<feature type="binding site" evidence="3">
    <location>
        <position position="259"/>
    </location>
    <ligand>
        <name>Ca(2+)</name>
        <dbReference type="ChEBI" id="CHEBI:29108"/>
        <label>2</label>
    </ligand>
</feature>
<feature type="site" description="Transition state stabilizer" evidence="3">
    <location>
        <position position="67"/>
    </location>
</feature>
<feature type="modified residue" description="Pyrrolidone carboxylic acid" evidence="1 3">
    <location>
        <position position="30"/>
    </location>
</feature>
<feature type="glycosylation site" description="N-linked (GlcNAc...) asparagine" evidence="2">
    <location>
        <position position="86"/>
    </location>
</feature>
<feature type="glycosylation site" description="N-linked (GlcNAc...) asparagine" evidence="2">
    <location>
        <position position="173"/>
    </location>
</feature>
<feature type="glycosylation site" description="N-linked (GlcNAc...) asparagine" evidence="2">
    <location>
        <position position="187"/>
    </location>
</feature>
<feature type="glycosylation site" description="N-linked (GlcNAc...) asparagine" evidence="2">
    <location>
        <position position="217"/>
    </location>
</feature>
<feature type="glycosylation site" description="N-linked (GlcNAc...) asparagine" evidence="2">
    <location>
        <position position="243"/>
    </location>
</feature>
<feature type="disulfide bond" evidence="3">
    <location>
        <begin position="40"/>
        <end position="120"/>
    </location>
</feature>
<feature type="disulfide bond" evidence="3">
    <location>
        <begin position="73"/>
        <end position="78"/>
    </location>
</feature>
<feature type="disulfide bond" evidence="3">
    <location>
        <begin position="126"/>
        <end position="329"/>
    </location>
</feature>
<feature type="disulfide bond" evidence="3">
    <location>
        <begin position="206"/>
        <end position="238"/>
    </location>
</feature>
<feature type="sequence conflict" description="In Ref. 1; AAA32842." evidence="7" ref="1">
    <original>L</original>
    <variation>K</variation>
    <location>
        <position position="150"/>
    </location>
</feature>
<feature type="sequence conflict" description="In Ref. 1; AAA32842." evidence="7" ref="1">
    <original>N</original>
    <variation>Y</variation>
    <location>
        <position position="227"/>
    </location>
</feature>
<organism>
    <name type="scientific">Arabidopsis thaliana</name>
    <name type="common">Mouse-ear cress</name>
    <dbReference type="NCBI Taxonomy" id="3702"/>
    <lineage>
        <taxon>Eukaryota</taxon>
        <taxon>Viridiplantae</taxon>
        <taxon>Streptophyta</taxon>
        <taxon>Embryophyta</taxon>
        <taxon>Tracheophyta</taxon>
        <taxon>Spermatophyta</taxon>
        <taxon>Magnoliopsida</taxon>
        <taxon>eudicotyledons</taxon>
        <taxon>Gunneridae</taxon>
        <taxon>Pentapetalae</taxon>
        <taxon>rosids</taxon>
        <taxon>malvids</taxon>
        <taxon>Brassicales</taxon>
        <taxon>Brassicaceae</taxon>
        <taxon>Camelineae</taxon>
        <taxon>Arabidopsis</taxon>
    </lineage>
</organism>
<gene>
    <name type="primary">PER22</name>
    <name type="synonym">P22</name>
    <name type="synonym">PRXEA</name>
    <name type="ordered locus">At2g38380</name>
    <name type="ORF">T19C21.13</name>
</gene>
<reference key="1">
    <citation type="journal article" date="1991" name="Gene">
        <title>Nucleotide sequences of two genomic DNAs encoding peroxidase of Arabidopsis thaliana.</title>
        <authorList>
            <person name="Intapruk C."/>
            <person name="Higashimura N."/>
            <person name="Yamamoto K."/>
            <person name="Okada N."/>
            <person name="Shinmyo A."/>
            <person name="Takano M."/>
        </authorList>
    </citation>
    <scope>NUCLEOTIDE SEQUENCE [GENOMIC DNA]</scope>
</reference>
<reference key="2">
    <citation type="journal article" date="2002" name="Eur. J. Biochem.">
        <title>Structural diversity and transcription of class III peroxidases from Arabidopsis thaliana.</title>
        <authorList>
            <person name="Welinder K.G."/>
            <person name="Justesen A.F."/>
            <person name="Kjaersgaard I.V.H."/>
            <person name="Jensen R.B."/>
            <person name="Rasmussen S.K."/>
            <person name="Jespersen H.M."/>
            <person name="Duroux L."/>
        </authorList>
    </citation>
    <scope>NUCLEOTIDE SEQUENCE [MRNA]</scope>
    <source>
        <strain>cv. Columbia</strain>
        <tissue>Leaf</tissue>
    </source>
</reference>
<reference key="3">
    <citation type="journal article" date="1999" name="Nature">
        <title>Sequence and analysis of chromosome 2 of the plant Arabidopsis thaliana.</title>
        <authorList>
            <person name="Lin X."/>
            <person name="Kaul S."/>
            <person name="Rounsley S.D."/>
            <person name="Shea T.P."/>
            <person name="Benito M.-I."/>
            <person name="Town C.D."/>
            <person name="Fujii C.Y."/>
            <person name="Mason T.M."/>
            <person name="Bowman C.L."/>
            <person name="Barnstead M.E."/>
            <person name="Feldblyum T.V."/>
            <person name="Buell C.R."/>
            <person name="Ketchum K.A."/>
            <person name="Lee J.J."/>
            <person name="Ronning C.M."/>
            <person name="Koo H.L."/>
            <person name="Moffat K.S."/>
            <person name="Cronin L.A."/>
            <person name="Shen M."/>
            <person name="Pai G."/>
            <person name="Van Aken S."/>
            <person name="Umayam L."/>
            <person name="Tallon L.J."/>
            <person name="Gill J.E."/>
            <person name="Adams M.D."/>
            <person name="Carrera A.J."/>
            <person name="Creasy T.H."/>
            <person name="Goodman H.M."/>
            <person name="Somerville C.R."/>
            <person name="Copenhaver G.P."/>
            <person name="Preuss D."/>
            <person name="Nierman W.C."/>
            <person name="White O."/>
            <person name="Eisen J.A."/>
            <person name="Salzberg S.L."/>
            <person name="Fraser C.M."/>
            <person name="Venter J.C."/>
        </authorList>
    </citation>
    <scope>NUCLEOTIDE SEQUENCE [LARGE SCALE GENOMIC DNA]</scope>
    <source>
        <strain>cv. Columbia</strain>
    </source>
</reference>
<reference key="4">
    <citation type="journal article" date="2017" name="Plant J.">
        <title>Araport11: a complete reannotation of the Arabidopsis thaliana reference genome.</title>
        <authorList>
            <person name="Cheng C.Y."/>
            <person name="Krishnakumar V."/>
            <person name="Chan A.P."/>
            <person name="Thibaud-Nissen F."/>
            <person name="Schobel S."/>
            <person name="Town C.D."/>
        </authorList>
    </citation>
    <scope>GENOME REANNOTATION</scope>
    <source>
        <strain>cv. Columbia</strain>
    </source>
</reference>
<reference key="5">
    <citation type="journal article" date="2003" name="Science">
        <title>Empirical analysis of transcriptional activity in the Arabidopsis genome.</title>
        <authorList>
            <person name="Yamada K."/>
            <person name="Lim J."/>
            <person name="Dale J.M."/>
            <person name="Chen H."/>
            <person name="Shinn P."/>
            <person name="Palm C.J."/>
            <person name="Southwick A.M."/>
            <person name="Wu H.C."/>
            <person name="Kim C.J."/>
            <person name="Nguyen M."/>
            <person name="Pham P.K."/>
            <person name="Cheuk R.F."/>
            <person name="Karlin-Newmann G."/>
            <person name="Liu S.X."/>
            <person name="Lam B."/>
            <person name="Sakano H."/>
            <person name="Wu T."/>
            <person name="Yu G."/>
            <person name="Miranda M."/>
            <person name="Quach H.L."/>
            <person name="Tripp M."/>
            <person name="Chang C.H."/>
            <person name="Lee J.M."/>
            <person name="Toriumi M.J."/>
            <person name="Chan M.M."/>
            <person name="Tang C.C."/>
            <person name="Onodera C.S."/>
            <person name="Deng J.M."/>
            <person name="Akiyama K."/>
            <person name="Ansari Y."/>
            <person name="Arakawa T."/>
            <person name="Banh J."/>
            <person name="Banno F."/>
            <person name="Bowser L."/>
            <person name="Brooks S.Y."/>
            <person name="Carninci P."/>
            <person name="Chao Q."/>
            <person name="Choy N."/>
            <person name="Enju A."/>
            <person name="Goldsmith A.D."/>
            <person name="Gurjal M."/>
            <person name="Hansen N.F."/>
            <person name="Hayashizaki Y."/>
            <person name="Johnson-Hopson C."/>
            <person name="Hsuan V.W."/>
            <person name="Iida K."/>
            <person name="Karnes M."/>
            <person name="Khan S."/>
            <person name="Koesema E."/>
            <person name="Ishida J."/>
            <person name="Jiang P.X."/>
            <person name="Jones T."/>
            <person name="Kawai J."/>
            <person name="Kamiya A."/>
            <person name="Meyers C."/>
            <person name="Nakajima M."/>
            <person name="Narusaka M."/>
            <person name="Seki M."/>
            <person name="Sakurai T."/>
            <person name="Satou M."/>
            <person name="Tamse R."/>
            <person name="Vaysberg M."/>
            <person name="Wallender E.K."/>
            <person name="Wong C."/>
            <person name="Yamamura Y."/>
            <person name="Yuan S."/>
            <person name="Shinozaki K."/>
            <person name="Davis R.W."/>
            <person name="Theologis A."/>
            <person name="Ecker J.R."/>
        </authorList>
    </citation>
    <scope>NUCLEOTIDE SEQUENCE [LARGE SCALE MRNA]</scope>
    <source>
        <strain>cv. Columbia</strain>
    </source>
</reference>
<reference key="6">
    <citation type="journal article" date="1995" name="Biochem. Soc. Trans.">
        <title>Gene structures of peroxidase isoenzymes in horseradish and Arabidopsis thaliana and their expression.</title>
        <authorList>
            <person name="Fujiyama K."/>
            <person name="Intapruk C."/>
            <person name="Shinmyo A."/>
        </authorList>
    </citation>
    <scope>TISSUE SPECIFICITY</scope>
    <source>
        <strain>cv. Columbia</strain>
    </source>
</reference>
<reference key="7">
    <citation type="journal article" date="2001" name="Plant Physiol. Biochem.">
        <title>Toward elucidating the global gene expression patterns of developing Arabidopsis: parallel analysis of 8300 genes by a high-density oligonucleotide probe array.</title>
        <authorList>
            <person name="Zhu T."/>
            <person name="Budworth P."/>
            <person name="Han B."/>
            <person name="Brown D."/>
            <person name="Chang H.-S."/>
            <person name="Zou G."/>
            <person name="Wang X."/>
        </authorList>
    </citation>
    <scope>TISSUE SPECIFICITY</scope>
    <source>
        <strain>cv. Columbia</strain>
    </source>
</reference>
<reference key="8">
    <citation type="journal article" date="1996" name="Ann. N. Y. Acad. Sci.">
        <title>Cis-regulatory elements of the peroxidase gene in Arabidopsis thaliana involved in root-specific expression and responsiveness to high-salt stress.</title>
        <authorList>
            <person name="Wanapu C."/>
            <person name="Shinmyo A."/>
        </authorList>
    </citation>
    <scope>INDUCTION</scope>
    <source>
        <strain>cv. Columbia</strain>
    </source>
</reference>
<reference key="9">
    <citation type="journal article" date="1998" name="FEBS Lett.">
        <title>Computational analyses and annotations of the Arabidopsis peroxidase gene family.</title>
        <authorList>
            <person name="Oestergaard L."/>
            <person name="Pedersen A.G."/>
            <person name="Jespersen H.M."/>
            <person name="Brunak S."/>
            <person name="Welinder K.G."/>
        </authorList>
    </citation>
    <scope>CHARACTERIZATION</scope>
    <source>
        <strain>cv. Columbia</strain>
    </source>
</reference>
<reference key="10">
    <citation type="journal article" date="2002" name="Gene">
        <title>Analysis and expression of the class III peroxidase large gene family in Arabidopsis thaliana.</title>
        <authorList>
            <person name="Tognolli M."/>
            <person name="Penel C."/>
            <person name="Greppin H."/>
            <person name="Simon P."/>
        </authorList>
    </citation>
    <scope>GENE FAMILY ORGANIZATION</scope>
    <scope>NOMENCLATURE</scope>
    <source>
        <strain>cv. Columbia</strain>
    </source>
</reference>
<proteinExistence type="evidence at protein level"/>